<proteinExistence type="evidence at transcript level"/>
<name>CALM_ALEFU</name>
<evidence type="ECO:0000250" key="1"/>
<evidence type="ECO:0000255" key="2">
    <source>
        <dbReference type="PROSITE-ProRule" id="PRU00448"/>
    </source>
</evidence>
<evidence type="ECO:0000305" key="3"/>
<dbReference type="EMBL" id="EF133873">
    <property type="protein sequence ID" value="ABO47878.1"/>
    <property type="molecule type" value="mRNA"/>
</dbReference>
<dbReference type="SMR" id="A4UHC0"/>
<dbReference type="GO" id="GO:0016460">
    <property type="term" value="C:myosin II complex"/>
    <property type="evidence" value="ECO:0007669"/>
    <property type="project" value="TreeGrafter"/>
</dbReference>
<dbReference type="GO" id="GO:0005509">
    <property type="term" value="F:calcium ion binding"/>
    <property type="evidence" value="ECO:0007669"/>
    <property type="project" value="InterPro"/>
</dbReference>
<dbReference type="CDD" id="cd00051">
    <property type="entry name" value="EFh"/>
    <property type="match status" value="2"/>
</dbReference>
<dbReference type="FunFam" id="1.10.238.10:FF:000034">
    <property type="entry name" value="Calmodulin"/>
    <property type="match status" value="1"/>
</dbReference>
<dbReference type="FunFam" id="1.10.238.10:FF:000042">
    <property type="entry name" value="Calmodulin"/>
    <property type="match status" value="1"/>
</dbReference>
<dbReference type="Gene3D" id="1.10.238.10">
    <property type="entry name" value="EF-hand"/>
    <property type="match status" value="3"/>
</dbReference>
<dbReference type="InterPro" id="IPR050230">
    <property type="entry name" value="CALM/Myosin/TropC-like"/>
</dbReference>
<dbReference type="InterPro" id="IPR011992">
    <property type="entry name" value="EF-hand-dom_pair"/>
</dbReference>
<dbReference type="InterPro" id="IPR018247">
    <property type="entry name" value="EF_Hand_1_Ca_BS"/>
</dbReference>
<dbReference type="InterPro" id="IPR002048">
    <property type="entry name" value="EF_hand_dom"/>
</dbReference>
<dbReference type="PANTHER" id="PTHR23048:SF0">
    <property type="entry name" value="CALMODULIN LIKE 3"/>
    <property type="match status" value="1"/>
</dbReference>
<dbReference type="PANTHER" id="PTHR23048">
    <property type="entry name" value="MYOSIN LIGHT CHAIN 1, 3"/>
    <property type="match status" value="1"/>
</dbReference>
<dbReference type="Pfam" id="PF13499">
    <property type="entry name" value="EF-hand_7"/>
    <property type="match status" value="2"/>
</dbReference>
<dbReference type="SMART" id="SM00054">
    <property type="entry name" value="EFh"/>
    <property type="match status" value="4"/>
</dbReference>
<dbReference type="SMART" id="SM01184">
    <property type="entry name" value="efhand_Ca_insen"/>
    <property type="match status" value="1"/>
</dbReference>
<dbReference type="SUPFAM" id="SSF47473">
    <property type="entry name" value="EF-hand"/>
    <property type="match status" value="1"/>
</dbReference>
<dbReference type="PROSITE" id="PS00018">
    <property type="entry name" value="EF_HAND_1"/>
    <property type="match status" value="4"/>
</dbReference>
<dbReference type="PROSITE" id="PS50222">
    <property type="entry name" value="EF_HAND_2"/>
    <property type="match status" value="4"/>
</dbReference>
<organism>
    <name type="scientific">Alexandrium fundyense</name>
    <name type="common">Dinoflagellate</name>
    <dbReference type="NCBI Taxonomy" id="2932"/>
    <lineage>
        <taxon>Eukaryota</taxon>
        <taxon>Sar</taxon>
        <taxon>Alveolata</taxon>
        <taxon>Dinophyceae</taxon>
        <taxon>Gonyaulacales</taxon>
        <taxon>Pyrocystaceae</taxon>
        <taxon>Alexandrium</taxon>
    </lineage>
</organism>
<feature type="initiator methionine" description="Removed" evidence="1">
    <location>
        <position position="1"/>
    </location>
</feature>
<feature type="chain" id="PRO_0000334493" description="Calmodulin">
    <location>
        <begin position="2"/>
        <end position="149"/>
    </location>
</feature>
<feature type="domain" description="EF-hand 1" evidence="2">
    <location>
        <begin position="8"/>
        <end position="43"/>
    </location>
</feature>
<feature type="domain" description="EF-hand 2" evidence="2">
    <location>
        <begin position="44"/>
        <end position="79"/>
    </location>
</feature>
<feature type="domain" description="EF-hand 3" evidence="2">
    <location>
        <begin position="81"/>
        <end position="116"/>
    </location>
</feature>
<feature type="domain" description="EF-hand 4" evidence="2">
    <location>
        <begin position="117"/>
        <end position="149"/>
    </location>
</feature>
<feature type="binding site" evidence="2">
    <location>
        <position position="21"/>
    </location>
    <ligand>
        <name>Ca(2+)</name>
        <dbReference type="ChEBI" id="CHEBI:29108"/>
        <label>1</label>
    </ligand>
</feature>
<feature type="binding site" evidence="2">
    <location>
        <position position="23"/>
    </location>
    <ligand>
        <name>Ca(2+)</name>
        <dbReference type="ChEBI" id="CHEBI:29108"/>
        <label>1</label>
    </ligand>
</feature>
<feature type="binding site" evidence="2">
    <location>
        <position position="25"/>
    </location>
    <ligand>
        <name>Ca(2+)</name>
        <dbReference type="ChEBI" id="CHEBI:29108"/>
        <label>1</label>
    </ligand>
</feature>
<feature type="binding site" evidence="2">
    <location>
        <position position="27"/>
    </location>
    <ligand>
        <name>Ca(2+)</name>
        <dbReference type="ChEBI" id="CHEBI:29108"/>
        <label>1</label>
    </ligand>
</feature>
<feature type="binding site" evidence="2">
    <location>
        <position position="32"/>
    </location>
    <ligand>
        <name>Ca(2+)</name>
        <dbReference type="ChEBI" id="CHEBI:29108"/>
        <label>1</label>
    </ligand>
</feature>
<feature type="binding site" evidence="2">
    <location>
        <position position="57"/>
    </location>
    <ligand>
        <name>Ca(2+)</name>
        <dbReference type="ChEBI" id="CHEBI:29108"/>
        <label>2</label>
    </ligand>
</feature>
<feature type="binding site" evidence="2">
    <location>
        <position position="59"/>
    </location>
    <ligand>
        <name>Ca(2+)</name>
        <dbReference type="ChEBI" id="CHEBI:29108"/>
        <label>2</label>
    </ligand>
</feature>
<feature type="binding site" evidence="2">
    <location>
        <position position="61"/>
    </location>
    <ligand>
        <name>Ca(2+)</name>
        <dbReference type="ChEBI" id="CHEBI:29108"/>
        <label>2</label>
    </ligand>
</feature>
<feature type="binding site" evidence="2">
    <location>
        <position position="63"/>
    </location>
    <ligand>
        <name>Ca(2+)</name>
        <dbReference type="ChEBI" id="CHEBI:29108"/>
        <label>2</label>
    </ligand>
</feature>
<feature type="binding site" evidence="2">
    <location>
        <position position="68"/>
    </location>
    <ligand>
        <name>Ca(2+)</name>
        <dbReference type="ChEBI" id="CHEBI:29108"/>
        <label>2</label>
    </ligand>
</feature>
<feature type="binding site" evidence="2">
    <location>
        <position position="94"/>
    </location>
    <ligand>
        <name>Ca(2+)</name>
        <dbReference type="ChEBI" id="CHEBI:29108"/>
        <label>3</label>
    </ligand>
</feature>
<feature type="binding site" evidence="2">
    <location>
        <position position="96"/>
    </location>
    <ligand>
        <name>Ca(2+)</name>
        <dbReference type="ChEBI" id="CHEBI:29108"/>
        <label>3</label>
    </ligand>
</feature>
<feature type="binding site" evidence="2">
    <location>
        <position position="98"/>
    </location>
    <ligand>
        <name>Ca(2+)</name>
        <dbReference type="ChEBI" id="CHEBI:29108"/>
        <label>3</label>
    </ligand>
</feature>
<feature type="binding site" evidence="2">
    <location>
        <position position="105"/>
    </location>
    <ligand>
        <name>Ca(2+)</name>
        <dbReference type="ChEBI" id="CHEBI:29108"/>
        <label>3</label>
    </ligand>
</feature>
<feature type="binding site" evidence="2">
    <location>
        <position position="130"/>
    </location>
    <ligand>
        <name>Ca(2+)</name>
        <dbReference type="ChEBI" id="CHEBI:29108"/>
        <label>4</label>
    </ligand>
</feature>
<feature type="binding site" evidence="2">
    <location>
        <position position="132"/>
    </location>
    <ligand>
        <name>Ca(2+)</name>
        <dbReference type="ChEBI" id="CHEBI:29108"/>
        <label>4</label>
    </ligand>
</feature>
<feature type="binding site" evidence="2">
    <location>
        <position position="134"/>
    </location>
    <ligand>
        <name>Ca(2+)</name>
        <dbReference type="ChEBI" id="CHEBI:29108"/>
        <label>4</label>
    </ligand>
</feature>
<feature type="binding site" evidence="2">
    <location>
        <position position="136"/>
    </location>
    <ligand>
        <name>Ca(2+)</name>
        <dbReference type="ChEBI" id="CHEBI:29108"/>
        <label>4</label>
    </ligand>
</feature>
<feature type="binding site" evidence="2">
    <location>
        <position position="141"/>
    </location>
    <ligand>
        <name>Ca(2+)</name>
        <dbReference type="ChEBI" id="CHEBI:29108"/>
        <label>4</label>
    </ligand>
</feature>
<feature type="modified residue" description="N-acetylalanine" evidence="1">
    <location>
        <position position="2"/>
    </location>
</feature>
<feature type="modified residue" description="N6,N6,N6-trimethyllysine" evidence="1">
    <location>
        <position position="116"/>
    </location>
</feature>
<sequence>MADQLTEEQIAEFKEAFSLFDKDGDGTITTKELGTVMRSLGQNPTEAELQDMINEVDADGNGTIDFPEFLSLMARKMKDTDTEEELIEAFKVFDRDGNGFISAAELRHVMTNLGEKLTDEEVDEMIREADVDGDGQINYEEFVKMMMAK</sequence>
<comment type="function">
    <text>Calmodulin mediates the control of a large number of enzymes, ion channels and other proteins by Ca(2+). Among the enzymes to be stimulated by the calmodulin-Ca(2+) complex are a number of protein kinases and phosphatases.</text>
</comment>
<comment type="miscellaneous">
    <text>This protein has four functional calcium-binding sites.</text>
</comment>
<comment type="similarity">
    <text evidence="3">Belongs to the calmodulin family.</text>
</comment>
<accession>A4UHC0</accession>
<keyword id="KW-0007">Acetylation</keyword>
<keyword id="KW-0106">Calcium</keyword>
<keyword id="KW-0479">Metal-binding</keyword>
<keyword id="KW-0488">Methylation</keyword>
<keyword id="KW-0677">Repeat</keyword>
<reference key="1">
    <citation type="journal article" date="2007" name="Proc. Natl. Acad. Sci. U.S.A.">
        <title>Spliced leader RNA trans-splicing in dinoflagellates.</title>
        <authorList>
            <person name="Zhang H."/>
            <person name="Hou Y."/>
            <person name="Miranda L."/>
            <person name="Campbell D.A."/>
            <person name="Sturm N.R."/>
            <person name="Gaasterland T."/>
            <person name="Lin S."/>
        </authorList>
    </citation>
    <scope>NUCLEOTIDE SEQUENCE [MRNA]</scope>
    <source>
        <strain>GT-CA28</strain>
    </source>
</reference>
<protein>
    <recommendedName>
        <fullName>Calmodulin</fullName>
        <shortName>CaM</shortName>
    </recommendedName>
</protein>